<organism>
    <name type="scientific">Cyanothece sp. (strain PCC 7425 / ATCC 29141)</name>
    <dbReference type="NCBI Taxonomy" id="395961"/>
    <lineage>
        <taxon>Bacteria</taxon>
        <taxon>Bacillati</taxon>
        <taxon>Cyanobacteriota</taxon>
        <taxon>Cyanophyceae</taxon>
        <taxon>Gomontiellales</taxon>
        <taxon>Cyanothecaceae</taxon>
        <taxon>Cyanothece</taxon>
    </lineage>
</organism>
<gene>
    <name evidence="2" type="primary">rpsL</name>
    <name evidence="2" type="synonym">rps12</name>
    <name type="ordered locus">Cyan7425_0711</name>
</gene>
<sequence length="136" mass="15048">MPTIQQLIRSERQELKKKTKSPALKSCPQRRGVCTRVYTTTPKKPNSALRKVARVRLTSGFEVTAYIPGIGHNLQEHSVVMIRGGRVKDLPGVRYHIIRGTLDTAGVKDRKQGRSKYGAKRPKPGAASTASTGKKR</sequence>
<name>RS12_CYAP4</name>
<feature type="chain" id="PRO_1000134629" description="Small ribosomal subunit protein uS12">
    <location>
        <begin position="1"/>
        <end position="136"/>
    </location>
</feature>
<feature type="region of interest" description="Disordered" evidence="3">
    <location>
        <begin position="1"/>
        <end position="28"/>
    </location>
</feature>
<feature type="region of interest" description="Disordered" evidence="3">
    <location>
        <begin position="101"/>
        <end position="136"/>
    </location>
</feature>
<feature type="compositionally biased region" description="Basic residues" evidence="3">
    <location>
        <begin position="113"/>
        <end position="123"/>
    </location>
</feature>
<feature type="modified residue" description="3-methylthioaspartic acid" evidence="1">
    <location>
        <position position="89"/>
    </location>
</feature>
<dbReference type="EMBL" id="CP001344">
    <property type="protein sequence ID" value="ACL43098.1"/>
    <property type="molecule type" value="Genomic_DNA"/>
</dbReference>
<dbReference type="SMR" id="B8HVS0"/>
<dbReference type="STRING" id="395961.Cyan7425_0711"/>
<dbReference type="KEGG" id="cyn:Cyan7425_0711"/>
<dbReference type="eggNOG" id="COG0048">
    <property type="taxonomic scope" value="Bacteria"/>
</dbReference>
<dbReference type="HOGENOM" id="CLU_104295_1_2_3"/>
<dbReference type="OrthoDB" id="9802366at2"/>
<dbReference type="GO" id="GO:0015935">
    <property type="term" value="C:small ribosomal subunit"/>
    <property type="evidence" value="ECO:0007669"/>
    <property type="project" value="InterPro"/>
</dbReference>
<dbReference type="GO" id="GO:0019843">
    <property type="term" value="F:rRNA binding"/>
    <property type="evidence" value="ECO:0007669"/>
    <property type="project" value="UniProtKB-UniRule"/>
</dbReference>
<dbReference type="GO" id="GO:0003735">
    <property type="term" value="F:structural constituent of ribosome"/>
    <property type="evidence" value="ECO:0007669"/>
    <property type="project" value="InterPro"/>
</dbReference>
<dbReference type="GO" id="GO:0000049">
    <property type="term" value="F:tRNA binding"/>
    <property type="evidence" value="ECO:0007669"/>
    <property type="project" value="UniProtKB-UniRule"/>
</dbReference>
<dbReference type="GO" id="GO:0006412">
    <property type="term" value="P:translation"/>
    <property type="evidence" value="ECO:0007669"/>
    <property type="project" value="UniProtKB-UniRule"/>
</dbReference>
<dbReference type="CDD" id="cd03368">
    <property type="entry name" value="Ribosomal_S12"/>
    <property type="match status" value="1"/>
</dbReference>
<dbReference type="FunFam" id="2.40.50.140:FF:000001">
    <property type="entry name" value="30S ribosomal protein S12"/>
    <property type="match status" value="1"/>
</dbReference>
<dbReference type="Gene3D" id="2.40.50.140">
    <property type="entry name" value="Nucleic acid-binding proteins"/>
    <property type="match status" value="1"/>
</dbReference>
<dbReference type="HAMAP" id="MF_00403_B">
    <property type="entry name" value="Ribosomal_uS12_B"/>
    <property type="match status" value="1"/>
</dbReference>
<dbReference type="InterPro" id="IPR012340">
    <property type="entry name" value="NA-bd_OB-fold"/>
</dbReference>
<dbReference type="InterPro" id="IPR006032">
    <property type="entry name" value="Ribosomal_uS12"/>
</dbReference>
<dbReference type="InterPro" id="IPR005679">
    <property type="entry name" value="Ribosomal_uS12_bac"/>
</dbReference>
<dbReference type="NCBIfam" id="TIGR00981">
    <property type="entry name" value="rpsL_bact"/>
    <property type="match status" value="1"/>
</dbReference>
<dbReference type="PANTHER" id="PTHR11652">
    <property type="entry name" value="30S RIBOSOMAL PROTEIN S12 FAMILY MEMBER"/>
    <property type="match status" value="1"/>
</dbReference>
<dbReference type="Pfam" id="PF00164">
    <property type="entry name" value="Ribosom_S12_S23"/>
    <property type="match status" value="1"/>
</dbReference>
<dbReference type="PIRSF" id="PIRSF002133">
    <property type="entry name" value="Ribosomal_S12/S23"/>
    <property type="match status" value="1"/>
</dbReference>
<dbReference type="PRINTS" id="PR01034">
    <property type="entry name" value="RIBOSOMALS12"/>
</dbReference>
<dbReference type="SUPFAM" id="SSF50249">
    <property type="entry name" value="Nucleic acid-binding proteins"/>
    <property type="match status" value="1"/>
</dbReference>
<dbReference type="PROSITE" id="PS00055">
    <property type="entry name" value="RIBOSOMAL_S12"/>
    <property type="match status" value="1"/>
</dbReference>
<reference key="1">
    <citation type="journal article" date="2011" name="MBio">
        <title>Novel metabolic attributes of the genus Cyanothece, comprising a group of unicellular nitrogen-fixing Cyanobacteria.</title>
        <authorList>
            <person name="Bandyopadhyay A."/>
            <person name="Elvitigala T."/>
            <person name="Welsh E."/>
            <person name="Stockel J."/>
            <person name="Liberton M."/>
            <person name="Min H."/>
            <person name="Sherman L.A."/>
            <person name="Pakrasi H.B."/>
        </authorList>
    </citation>
    <scope>NUCLEOTIDE SEQUENCE [LARGE SCALE GENOMIC DNA]</scope>
    <source>
        <strain>PCC 7425 / ATCC 29141</strain>
    </source>
</reference>
<proteinExistence type="inferred from homology"/>
<protein>
    <recommendedName>
        <fullName evidence="2">Small ribosomal subunit protein uS12</fullName>
    </recommendedName>
    <alternativeName>
        <fullName evidence="4">30S ribosomal protein S12</fullName>
    </alternativeName>
</protein>
<comment type="function">
    <text evidence="2">With S4 and S5 plays an important role in translational accuracy.</text>
</comment>
<comment type="function">
    <text evidence="2">Interacts with and stabilizes bases of the 16S rRNA that are involved in tRNA selection in the A site and with the mRNA backbone. Located at the interface of the 30S and 50S subunits, it traverses the body of the 30S subunit contacting proteins on the other side and probably holding the rRNA structure together. The combined cluster of proteins S8, S12 and S17 appears to hold together the shoulder and platform of the 30S subunit.</text>
</comment>
<comment type="subunit">
    <text evidence="2">Part of the 30S ribosomal subunit. Contacts proteins S8 and S17. May interact with IF1 in the 30S initiation complex.</text>
</comment>
<comment type="similarity">
    <text evidence="2">Belongs to the universal ribosomal protein uS12 family.</text>
</comment>
<evidence type="ECO:0000250" key="1"/>
<evidence type="ECO:0000255" key="2">
    <source>
        <dbReference type="HAMAP-Rule" id="MF_00403"/>
    </source>
</evidence>
<evidence type="ECO:0000256" key="3">
    <source>
        <dbReference type="SAM" id="MobiDB-lite"/>
    </source>
</evidence>
<evidence type="ECO:0000305" key="4"/>
<keyword id="KW-0488">Methylation</keyword>
<keyword id="KW-0687">Ribonucleoprotein</keyword>
<keyword id="KW-0689">Ribosomal protein</keyword>
<keyword id="KW-0694">RNA-binding</keyword>
<keyword id="KW-0699">rRNA-binding</keyword>
<keyword id="KW-0820">tRNA-binding</keyword>
<accession>B8HVS0</accession>